<reference key="1">
    <citation type="journal article" date="2004" name="Proc. Natl. Acad. Sci. U.S.A.">
        <title>Complete genomes of two clinical Staphylococcus aureus strains: evidence for the rapid evolution of virulence and drug resistance.</title>
        <authorList>
            <person name="Holden M.T.G."/>
            <person name="Feil E.J."/>
            <person name="Lindsay J.A."/>
            <person name="Peacock S.J."/>
            <person name="Day N.P.J."/>
            <person name="Enright M.C."/>
            <person name="Foster T.J."/>
            <person name="Moore C.E."/>
            <person name="Hurst L."/>
            <person name="Atkin R."/>
            <person name="Barron A."/>
            <person name="Bason N."/>
            <person name="Bentley S.D."/>
            <person name="Chillingworth C."/>
            <person name="Chillingworth T."/>
            <person name="Churcher C."/>
            <person name="Clark L."/>
            <person name="Corton C."/>
            <person name="Cronin A."/>
            <person name="Doggett J."/>
            <person name="Dowd L."/>
            <person name="Feltwell T."/>
            <person name="Hance Z."/>
            <person name="Harris B."/>
            <person name="Hauser H."/>
            <person name="Holroyd S."/>
            <person name="Jagels K."/>
            <person name="James K.D."/>
            <person name="Lennard N."/>
            <person name="Line A."/>
            <person name="Mayes R."/>
            <person name="Moule S."/>
            <person name="Mungall K."/>
            <person name="Ormond D."/>
            <person name="Quail M.A."/>
            <person name="Rabbinowitsch E."/>
            <person name="Rutherford K.M."/>
            <person name="Sanders M."/>
            <person name="Sharp S."/>
            <person name="Simmonds M."/>
            <person name="Stevens K."/>
            <person name="Whitehead S."/>
            <person name="Barrell B.G."/>
            <person name="Spratt B.G."/>
            <person name="Parkhill J."/>
        </authorList>
    </citation>
    <scope>NUCLEOTIDE SEQUENCE [LARGE SCALE GENOMIC DNA]</scope>
    <source>
        <strain>MSSA476</strain>
    </source>
</reference>
<dbReference type="EC" id="6.1.1.16" evidence="1"/>
<dbReference type="EMBL" id="BX571857">
    <property type="protein sequence ID" value="CAG42262.1"/>
    <property type="molecule type" value="Genomic_DNA"/>
</dbReference>
<dbReference type="RefSeq" id="WP_000631973.1">
    <property type="nucleotide sequence ID" value="NC_002953.3"/>
</dbReference>
<dbReference type="SMR" id="Q6GBV8"/>
<dbReference type="KEGG" id="sas:SAS0487"/>
<dbReference type="HOGENOM" id="CLU_013528_0_1_9"/>
<dbReference type="GO" id="GO:0005829">
    <property type="term" value="C:cytosol"/>
    <property type="evidence" value="ECO:0007669"/>
    <property type="project" value="TreeGrafter"/>
</dbReference>
<dbReference type="GO" id="GO:0005524">
    <property type="term" value="F:ATP binding"/>
    <property type="evidence" value="ECO:0007669"/>
    <property type="project" value="UniProtKB-UniRule"/>
</dbReference>
<dbReference type="GO" id="GO:0004817">
    <property type="term" value="F:cysteine-tRNA ligase activity"/>
    <property type="evidence" value="ECO:0007669"/>
    <property type="project" value="UniProtKB-UniRule"/>
</dbReference>
<dbReference type="GO" id="GO:0008270">
    <property type="term" value="F:zinc ion binding"/>
    <property type="evidence" value="ECO:0007669"/>
    <property type="project" value="UniProtKB-UniRule"/>
</dbReference>
<dbReference type="GO" id="GO:0006423">
    <property type="term" value="P:cysteinyl-tRNA aminoacylation"/>
    <property type="evidence" value="ECO:0007669"/>
    <property type="project" value="UniProtKB-UniRule"/>
</dbReference>
<dbReference type="CDD" id="cd00672">
    <property type="entry name" value="CysRS_core"/>
    <property type="match status" value="1"/>
</dbReference>
<dbReference type="FunFam" id="1.20.120.1910:FF:000002">
    <property type="entry name" value="Cysteine--tRNA ligase"/>
    <property type="match status" value="1"/>
</dbReference>
<dbReference type="FunFam" id="3.40.50.620:FF:000009">
    <property type="entry name" value="Cysteine--tRNA ligase"/>
    <property type="match status" value="1"/>
</dbReference>
<dbReference type="Gene3D" id="1.20.120.1910">
    <property type="entry name" value="Cysteine-tRNA ligase, C-terminal anti-codon recognition domain"/>
    <property type="match status" value="1"/>
</dbReference>
<dbReference type="Gene3D" id="3.40.50.620">
    <property type="entry name" value="HUPs"/>
    <property type="match status" value="1"/>
</dbReference>
<dbReference type="HAMAP" id="MF_00041">
    <property type="entry name" value="Cys_tRNA_synth"/>
    <property type="match status" value="1"/>
</dbReference>
<dbReference type="InterPro" id="IPR015803">
    <property type="entry name" value="Cys-tRNA-ligase"/>
</dbReference>
<dbReference type="InterPro" id="IPR015273">
    <property type="entry name" value="Cys-tRNA-synt_Ia_DALR"/>
</dbReference>
<dbReference type="InterPro" id="IPR024909">
    <property type="entry name" value="Cys-tRNA/MSH_ligase"/>
</dbReference>
<dbReference type="InterPro" id="IPR056411">
    <property type="entry name" value="CysS_C"/>
</dbReference>
<dbReference type="InterPro" id="IPR014729">
    <property type="entry name" value="Rossmann-like_a/b/a_fold"/>
</dbReference>
<dbReference type="InterPro" id="IPR032678">
    <property type="entry name" value="tRNA-synt_1_cat_dom"/>
</dbReference>
<dbReference type="InterPro" id="IPR009080">
    <property type="entry name" value="tRNAsynth_Ia_anticodon-bd"/>
</dbReference>
<dbReference type="NCBIfam" id="TIGR00435">
    <property type="entry name" value="cysS"/>
    <property type="match status" value="1"/>
</dbReference>
<dbReference type="PANTHER" id="PTHR10890:SF3">
    <property type="entry name" value="CYSTEINE--TRNA LIGASE, CYTOPLASMIC"/>
    <property type="match status" value="1"/>
</dbReference>
<dbReference type="PANTHER" id="PTHR10890">
    <property type="entry name" value="CYSTEINYL-TRNA SYNTHETASE"/>
    <property type="match status" value="1"/>
</dbReference>
<dbReference type="Pfam" id="PF23493">
    <property type="entry name" value="CysS_C"/>
    <property type="match status" value="1"/>
</dbReference>
<dbReference type="Pfam" id="PF09190">
    <property type="entry name" value="DALR_2"/>
    <property type="match status" value="1"/>
</dbReference>
<dbReference type="Pfam" id="PF01406">
    <property type="entry name" value="tRNA-synt_1e"/>
    <property type="match status" value="1"/>
</dbReference>
<dbReference type="PRINTS" id="PR00983">
    <property type="entry name" value="TRNASYNTHCYS"/>
</dbReference>
<dbReference type="SMART" id="SM00840">
    <property type="entry name" value="DALR_2"/>
    <property type="match status" value="1"/>
</dbReference>
<dbReference type="SUPFAM" id="SSF47323">
    <property type="entry name" value="Anticodon-binding domain of a subclass of class I aminoacyl-tRNA synthetases"/>
    <property type="match status" value="1"/>
</dbReference>
<dbReference type="SUPFAM" id="SSF52374">
    <property type="entry name" value="Nucleotidylyl transferase"/>
    <property type="match status" value="1"/>
</dbReference>
<protein>
    <recommendedName>
        <fullName evidence="1">Cysteine--tRNA ligase</fullName>
        <ecNumber evidence="1">6.1.1.16</ecNumber>
    </recommendedName>
    <alternativeName>
        <fullName evidence="1">Cysteinyl-tRNA synthetase</fullName>
        <shortName evidence="1">CysRS</shortName>
    </alternativeName>
</protein>
<comment type="catalytic activity">
    <reaction evidence="1">
        <text>tRNA(Cys) + L-cysteine + ATP = L-cysteinyl-tRNA(Cys) + AMP + diphosphate</text>
        <dbReference type="Rhea" id="RHEA:17773"/>
        <dbReference type="Rhea" id="RHEA-COMP:9661"/>
        <dbReference type="Rhea" id="RHEA-COMP:9679"/>
        <dbReference type="ChEBI" id="CHEBI:30616"/>
        <dbReference type="ChEBI" id="CHEBI:33019"/>
        <dbReference type="ChEBI" id="CHEBI:35235"/>
        <dbReference type="ChEBI" id="CHEBI:78442"/>
        <dbReference type="ChEBI" id="CHEBI:78517"/>
        <dbReference type="ChEBI" id="CHEBI:456215"/>
        <dbReference type="EC" id="6.1.1.16"/>
    </reaction>
</comment>
<comment type="cofactor">
    <cofactor evidence="1">
        <name>Zn(2+)</name>
        <dbReference type="ChEBI" id="CHEBI:29105"/>
    </cofactor>
    <text evidence="1">Binds 1 zinc ion per subunit.</text>
</comment>
<comment type="subunit">
    <text evidence="1">Monomer.</text>
</comment>
<comment type="subcellular location">
    <subcellularLocation>
        <location evidence="1">Cytoplasm</location>
    </subcellularLocation>
</comment>
<comment type="similarity">
    <text evidence="1">Belongs to the class-I aminoacyl-tRNA synthetase family.</text>
</comment>
<keyword id="KW-0030">Aminoacyl-tRNA synthetase</keyword>
<keyword id="KW-0067">ATP-binding</keyword>
<keyword id="KW-0963">Cytoplasm</keyword>
<keyword id="KW-0436">Ligase</keyword>
<keyword id="KW-0479">Metal-binding</keyword>
<keyword id="KW-0547">Nucleotide-binding</keyword>
<keyword id="KW-0648">Protein biosynthesis</keyword>
<keyword id="KW-0862">Zinc</keyword>
<proteinExistence type="inferred from homology"/>
<name>SYC_STAAS</name>
<sequence length="466" mass="53713">MITLYNTLTRQKEVFKPIEPGKVKMYVCGPTVYNYIHIGNARPAINYDVVRRYFEYQGYNVEYVSNFTDVDDKLIKRSQELNQSVPEIAEKYIAAFHEDVGALNVRKATSNPRVMDHMDDIIQFIKDLVDRGYAYESGGDVYFRTRKFEGYGKLSHQSIDDLKVGARIDAGEHKEDALDFTLWKKAKPGEISWDSPFGEGRPGWHIECSVMAFHELGPTIDIHAGGSDLQFPHHENEIAQSEAHNHAPFANYWMHNGFINIDNEKMSKSLGNFILVHDIIKEVDPDVLRFFMISVHYRSPINYNLELVESARSGLERIRNSYQLIEERAQIATNIENQQTYIDQIDAILNRFETVMNDDFNTANAITAWYDLAKLANKYVLENTTSTEVIDKFKAVYQIFSDVLGVPLKSKNADELLDEDVEKLIEERNEARKNKDFARADEIRDMLKSQNIILEDTPQGVRFKRG</sequence>
<gene>
    <name evidence="1" type="primary">cysS</name>
    <name type="ordered locus">SAS0487</name>
</gene>
<evidence type="ECO:0000255" key="1">
    <source>
        <dbReference type="HAMAP-Rule" id="MF_00041"/>
    </source>
</evidence>
<organism>
    <name type="scientific">Staphylococcus aureus (strain MSSA476)</name>
    <dbReference type="NCBI Taxonomy" id="282459"/>
    <lineage>
        <taxon>Bacteria</taxon>
        <taxon>Bacillati</taxon>
        <taxon>Bacillota</taxon>
        <taxon>Bacilli</taxon>
        <taxon>Bacillales</taxon>
        <taxon>Staphylococcaceae</taxon>
        <taxon>Staphylococcus</taxon>
    </lineage>
</organism>
<accession>Q6GBV8</accession>
<feature type="chain" id="PRO_0000159481" description="Cysteine--tRNA ligase">
    <location>
        <begin position="1"/>
        <end position="466"/>
    </location>
</feature>
<feature type="short sequence motif" description="'HIGH' region">
    <location>
        <begin position="30"/>
        <end position="40"/>
    </location>
</feature>
<feature type="short sequence motif" description="'KMSKS' region">
    <location>
        <begin position="265"/>
        <end position="269"/>
    </location>
</feature>
<feature type="binding site" evidence="1">
    <location>
        <position position="28"/>
    </location>
    <ligand>
        <name>Zn(2+)</name>
        <dbReference type="ChEBI" id="CHEBI:29105"/>
    </ligand>
</feature>
<feature type="binding site" evidence="1">
    <location>
        <position position="208"/>
    </location>
    <ligand>
        <name>Zn(2+)</name>
        <dbReference type="ChEBI" id="CHEBI:29105"/>
    </ligand>
</feature>
<feature type="binding site" evidence="1">
    <location>
        <position position="233"/>
    </location>
    <ligand>
        <name>Zn(2+)</name>
        <dbReference type="ChEBI" id="CHEBI:29105"/>
    </ligand>
</feature>
<feature type="binding site" evidence="1">
    <location>
        <position position="237"/>
    </location>
    <ligand>
        <name>Zn(2+)</name>
        <dbReference type="ChEBI" id="CHEBI:29105"/>
    </ligand>
</feature>
<feature type="binding site" evidence="1">
    <location>
        <position position="268"/>
    </location>
    <ligand>
        <name>ATP</name>
        <dbReference type="ChEBI" id="CHEBI:30616"/>
    </ligand>
</feature>